<dbReference type="EC" id="2.1.1.74" evidence="1"/>
<dbReference type="EMBL" id="CP000812">
    <property type="protein sequence ID" value="ABV33250.1"/>
    <property type="molecule type" value="Genomic_DNA"/>
</dbReference>
<dbReference type="RefSeq" id="WP_012002731.1">
    <property type="nucleotide sequence ID" value="NZ_BSDV01000001.1"/>
</dbReference>
<dbReference type="SMR" id="A8F516"/>
<dbReference type="STRING" id="416591.Tlet_0684"/>
<dbReference type="KEGG" id="tle:Tlet_0684"/>
<dbReference type="eggNOG" id="COG1206">
    <property type="taxonomic scope" value="Bacteria"/>
</dbReference>
<dbReference type="HOGENOM" id="CLU_033057_1_0_0"/>
<dbReference type="OrthoDB" id="9803114at2"/>
<dbReference type="Proteomes" id="UP000002016">
    <property type="component" value="Chromosome"/>
</dbReference>
<dbReference type="GO" id="GO:0005829">
    <property type="term" value="C:cytosol"/>
    <property type="evidence" value="ECO:0007669"/>
    <property type="project" value="TreeGrafter"/>
</dbReference>
<dbReference type="GO" id="GO:0050660">
    <property type="term" value="F:flavin adenine dinucleotide binding"/>
    <property type="evidence" value="ECO:0007669"/>
    <property type="project" value="UniProtKB-UniRule"/>
</dbReference>
<dbReference type="GO" id="GO:0047151">
    <property type="term" value="F:tRNA (uracil(54)-C5)-methyltransferase activity, 5,10-methylenetetrahydrofolate-dependent"/>
    <property type="evidence" value="ECO:0007669"/>
    <property type="project" value="UniProtKB-UniRule"/>
</dbReference>
<dbReference type="GO" id="GO:0030488">
    <property type="term" value="P:tRNA methylation"/>
    <property type="evidence" value="ECO:0007669"/>
    <property type="project" value="TreeGrafter"/>
</dbReference>
<dbReference type="GO" id="GO:0002098">
    <property type="term" value="P:tRNA wobble uridine modification"/>
    <property type="evidence" value="ECO:0007669"/>
    <property type="project" value="TreeGrafter"/>
</dbReference>
<dbReference type="Gene3D" id="3.50.50.60">
    <property type="entry name" value="FAD/NAD(P)-binding domain"/>
    <property type="match status" value="2"/>
</dbReference>
<dbReference type="HAMAP" id="MF_01037">
    <property type="entry name" value="TrmFO"/>
    <property type="match status" value="1"/>
</dbReference>
<dbReference type="InterPro" id="IPR036188">
    <property type="entry name" value="FAD/NAD-bd_sf"/>
</dbReference>
<dbReference type="InterPro" id="IPR002218">
    <property type="entry name" value="MnmG-rel"/>
</dbReference>
<dbReference type="InterPro" id="IPR040131">
    <property type="entry name" value="MnmG_N"/>
</dbReference>
<dbReference type="InterPro" id="IPR004417">
    <property type="entry name" value="TrmFO"/>
</dbReference>
<dbReference type="NCBIfam" id="TIGR00137">
    <property type="entry name" value="gid_trmFO"/>
    <property type="match status" value="1"/>
</dbReference>
<dbReference type="NCBIfam" id="NF003739">
    <property type="entry name" value="PRK05335.1"/>
    <property type="match status" value="1"/>
</dbReference>
<dbReference type="PANTHER" id="PTHR11806">
    <property type="entry name" value="GLUCOSE INHIBITED DIVISION PROTEIN A"/>
    <property type="match status" value="1"/>
</dbReference>
<dbReference type="PANTHER" id="PTHR11806:SF2">
    <property type="entry name" value="METHYLENETETRAHYDROFOLATE--TRNA-(URACIL-5-)-METHYLTRANSFERASE TRMFO"/>
    <property type="match status" value="1"/>
</dbReference>
<dbReference type="Pfam" id="PF01134">
    <property type="entry name" value="GIDA"/>
    <property type="match status" value="1"/>
</dbReference>
<dbReference type="SUPFAM" id="SSF51905">
    <property type="entry name" value="FAD/NAD(P)-binding domain"/>
    <property type="match status" value="1"/>
</dbReference>
<sequence>MKVHVVGAGLSGSEIAYQLAIRGLKVILHEMRPSKMTPVHKTSYFAELVCSNSLKSDSIKNASGLLKRELELFGSLILRVARNCAVPAGKALAVDREEFSKQVTHVIRESGIDIVIEELRYIPDSKEDIWIIATGPATSDSFASWLREKVGHNMYFFDAVSPIITADSIDYSVVFRADRYGIGNQDYLNCPMNEYEYDRFYEALINAEVLPVKDFEKDLLFERCKPIEDIAKSGKRSLLFGPMKPTGIIDPRTGKQPFAVVQLRKENLDETLYNIVGFQTRLKWGEQRKIIRLIPGLEKAEIVRYGVMHKNIYINSRKVLDPFMRLKNDRKIFFAGQITGVEGYLESVASGLYVALNVYRISKNQEPLELPKSTMTGCLLNYILKGTDTTLQPMYANYGLMGPANKNREEVAKTALRDLENFLNYSQWKEGGIRENTVKGF</sequence>
<name>TRMFO_PSELT</name>
<comment type="function">
    <text evidence="1">Catalyzes the folate-dependent formation of 5-methyl-uridine at position 54 (M-5-U54) in all tRNAs.</text>
</comment>
<comment type="catalytic activity">
    <reaction evidence="1">
        <text>uridine(54) in tRNA + (6R)-5,10-methylene-5,6,7,8-tetrahydrofolate + NADH + H(+) = 5-methyluridine(54) in tRNA + (6S)-5,6,7,8-tetrahydrofolate + NAD(+)</text>
        <dbReference type="Rhea" id="RHEA:16873"/>
        <dbReference type="Rhea" id="RHEA-COMP:10167"/>
        <dbReference type="Rhea" id="RHEA-COMP:10193"/>
        <dbReference type="ChEBI" id="CHEBI:15378"/>
        <dbReference type="ChEBI" id="CHEBI:15636"/>
        <dbReference type="ChEBI" id="CHEBI:57453"/>
        <dbReference type="ChEBI" id="CHEBI:57540"/>
        <dbReference type="ChEBI" id="CHEBI:57945"/>
        <dbReference type="ChEBI" id="CHEBI:65315"/>
        <dbReference type="ChEBI" id="CHEBI:74447"/>
        <dbReference type="EC" id="2.1.1.74"/>
    </reaction>
</comment>
<comment type="catalytic activity">
    <reaction evidence="1">
        <text>uridine(54) in tRNA + (6R)-5,10-methylene-5,6,7,8-tetrahydrofolate + NADPH + H(+) = 5-methyluridine(54) in tRNA + (6S)-5,6,7,8-tetrahydrofolate + NADP(+)</text>
        <dbReference type="Rhea" id="RHEA:62372"/>
        <dbReference type="Rhea" id="RHEA-COMP:10167"/>
        <dbReference type="Rhea" id="RHEA-COMP:10193"/>
        <dbReference type="ChEBI" id="CHEBI:15378"/>
        <dbReference type="ChEBI" id="CHEBI:15636"/>
        <dbReference type="ChEBI" id="CHEBI:57453"/>
        <dbReference type="ChEBI" id="CHEBI:57783"/>
        <dbReference type="ChEBI" id="CHEBI:58349"/>
        <dbReference type="ChEBI" id="CHEBI:65315"/>
        <dbReference type="ChEBI" id="CHEBI:74447"/>
        <dbReference type="EC" id="2.1.1.74"/>
    </reaction>
</comment>
<comment type="cofactor">
    <cofactor evidence="1">
        <name>FAD</name>
        <dbReference type="ChEBI" id="CHEBI:57692"/>
    </cofactor>
</comment>
<comment type="subcellular location">
    <subcellularLocation>
        <location evidence="1">Cytoplasm</location>
    </subcellularLocation>
</comment>
<comment type="similarity">
    <text evidence="1">Belongs to the MnmG family. TrmFO subfamily.</text>
</comment>
<accession>A8F516</accession>
<reference key="1">
    <citation type="submission" date="2007-08" db="EMBL/GenBank/DDBJ databases">
        <title>Complete sequence of Thermotoga lettingae TMO.</title>
        <authorList>
            <consortium name="US DOE Joint Genome Institute"/>
            <person name="Copeland A."/>
            <person name="Lucas S."/>
            <person name="Lapidus A."/>
            <person name="Barry K."/>
            <person name="Glavina del Rio T."/>
            <person name="Dalin E."/>
            <person name="Tice H."/>
            <person name="Pitluck S."/>
            <person name="Foster B."/>
            <person name="Bruce D."/>
            <person name="Schmutz J."/>
            <person name="Larimer F."/>
            <person name="Land M."/>
            <person name="Hauser L."/>
            <person name="Kyrpides N."/>
            <person name="Mikhailova N."/>
            <person name="Nelson K."/>
            <person name="Gogarten J.P."/>
            <person name="Noll K."/>
            <person name="Richardson P."/>
        </authorList>
    </citation>
    <scope>NUCLEOTIDE SEQUENCE [LARGE SCALE GENOMIC DNA]</scope>
    <source>
        <strain>ATCC BAA-301 / DSM 14385 / NBRC 107922 / TMO</strain>
    </source>
</reference>
<protein>
    <recommendedName>
        <fullName evidence="1">Methylenetetrahydrofolate--tRNA-(uracil-5-)-methyltransferase TrmFO</fullName>
        <ecNumber evidence="1">2.1.1.74</ecNumber>
    </recommendedName>
    <alternativeName>
        <fullName evidence="1">Folate-dependent tRNA (uracil-5-)-methyltransferase</fullName>
    </alternativeName>
    <alternativeName>
        <fullName evidence="1">Folate-dependent tRNA(M-5-U54)-methyltransferase</fullName>
    </alternativeName>
</protein>
<feature type="chain" id="PRO_0000346416" description="Methylenetetrahydrofolate--tRNA-(uracil-5-)-methyltransferase TrmFO">
    <location>
        <begin position="1"/>
        <end position="441"/>
    </location>
</feature>
<feature type="binding site" evidence="1">
    <location>
        <begin position="7"/>
        <end position="12"/>
    </location>
    <ligand>
        <name>FAD</name>
        <dbReference type="ChEBI" id="CHEBI:57692"/>
    </ligand>
</feature>
<gene>
    <name evidence="1" type="primary">trmFO</name>
    <name type="ordered locus">Tlet_0684</name>
</gene>
<organism>
    <name type="scientific">Pseudothermotoga lettingae (strain ATCC BAA-301 / DSM 14385 / NBRC 107922 / TMO)</name>
    <name type="common">Thermotoga lettingae</name>
    <dbReference type="NCBI Taxonomy" id="416591"/>
    <lineage>
        <taxon>Bacteria</taxon>
        <taxon>Thermotogati</taxon>
        <taxon>Thermotogota</taxon>
        <taxon>Thermotogae</taxon>
        <taxon>Thermotogales</taxon>
        <taxon>Thermotogaceae</taxon>
        <taxon>Pseudothermotoga</taxon>
    </lineage>
</organism>
<proteinExistence type="inferred from homology"/>
<evidence type="ECO:0000255" key="1">
    <source>
        <dbReference type="HAMAP-Rule" id="MF_01037"/>
    </source>
</evidence>
<keyword id="KW-0963">Cytoplasm</keyword>
<keyword id="KW-0274">FAD</keyword>
<keyword id="KW-0285">Flavoprotein</keyword>
<keyword id="KW-0489">Methyltransferase</keyword>
<keyword id="KW-0520">NAD</keyword>
<keyword id="KW-0521">NADP</keyword>
<keyword id="KW-1185">Reference proteome</keyword>
<keyword id="KW-0808">Transferase</keyword>
<keyword id="KW-0819">tRNA processing</keyword>